<evidence type="ECO:0000250" key="1">
    <source>
        <dbReference type="UniProtKB" id="P18486"/>
    </source>
</evidence>
<evidence type="ECO:0000250" key="2">
    <source>
        <dbReference type="UniProtKB" id="Q16S21"/>
    </source>
</evidence>
<evidence type="ECO:0000305" key="3"/>
<sequence>TSTSYPSIVGEMLASGFGVIGFSWICSPACTELEVVVMDWLAKFLKPPAHFQHASDGPGGGVIQGSASEAVLVAVLAAREQAVASYRESHPELSESEVRGRLVAYSSDQSNSCIEKAGVLAAMPIRLLPAGEDFVLRGDTLRGAIEEDVAAGRIPVICVATLGTTGTCAYDDIESLSAVCEEFKVWLHVDAAYAGGAFALEECSDLRKGLDRVDSLNFNLHKFMLVNFDCSAMWLRDANKVVDSFNVDRIYLKHKHEGQSQIPDFRHWQIPLGRRFRALKVWITFRTLGAEGLRNHVRKHIELAKQFEQLVLKDSRFELVAPSALGLV</sequence>
<proteinExistence type="evidence at transcript level"/>
<dbReference type="EC" id="4.1.1.107" evidence="1"/>
<dbReference type="EMBL" id="AF121109">
    <property type="protein sequence ID" value="AAD25393.1"/>
    <property type="molecule type" value="mRNA"/>
</dbReference>
<dbReference type="SMR" id="P81893"/>
<dbReference type="OrthoDB" id="639767at2759"/>
<dbReference type="GO" id="GO:0005737">
    <property type="term" value="C:cytoplasm"/>
    <property type="evidence" value="ECO:0007669"/>
    <property type="project" value="TreeGrafter"/>
</dbReference>
<dbReference type="GO" id="GO:0106425">
    <property type="term" value="F:3,4-dihydroxyphenylacetaldehyde synthase activity"/>
    <property type="evidence" value="ECO:0007669"/>
    <property type="project" value="UniProtKB-EC"/>
</dbReference>
<dbReference type="GO" id="GO:0004058">
    <property type="term" value="F:aromatic-L-amino-acid decarboxylase activity"/>
    <property type="evidence" value="ECO:0007669"/>
    <property type="project" value="TreeGrafter"/>
</dbReference>
<dbReference type="GO" id="GO:0030170">
    <property type="term" value="F:pyridoxal phosphate binding"/>
    <property type="evidence" value="ECO:0007669"/>
    <property type="project" value="InterPro"/>
</dbReference>
<dbReference type="GO" id="GO:0042302">
    <property type="term" value="F:structural constituent of cuticle"/>
    <property type="evidence" value="ECO:0007669"/>
    <property type="project" value="UniProtKB-KW"/>
</dbReference>
<dbReference type="GO" id="GO:0006520">
    <property type="term" value="P:amino acid metabolic process"/>
    <property type="evidence" value="ECO:0007669"/>
    <property type="project" value="InterPro"/>
</dbReference>
<dbReference type="GO" id="GO:0019752">
    <property type="term" value="P:carboxylic acid metabolic process"/>
    <property type="evidence" value="ECO:0007669"/>
    <property type="project" value="InterPro"/>
</dbReference>
<dbReference type="GO" id="GO:0006584">
    <property type="term" value="P:catecholamine metabolic process"/>
    <property type="evidence" value="ECO:0000250"/>
    <property type="project" value="UniProtKB"/>
</dbReference>
<dbReference type="GO" id="GO:0040003">
    <property type="term" value="P:chitin-based cuticle development"/>
    <property type="evidence" value="ECO:0000250"/>
    <property type="project" value="UniProtKB"/>
</dbReference>
<dbReference type="GO" id="GO:0042335">
    <property type="term" value="P:cuticle development"/>
    <property type="evidence" value="ECO:0000250"/>
    <property type="project" value="UniProtKB"/>
</dbReference>
<dbReference type="FunFam" id="3.40.640.10:FF:000025">
    <property type="entry name" value="Histidine decarboxylase"/>
    <property type="match status" value="1"/>
</dbReference>
<dbReference type="Gene3D" id="3.90.1150.10">
    <property type="entry name" value="Aspartate Aminotransferase, domain 1"/>
    <property type="match status" value="1"/>
</dbReference>
<dbReference type="Gene3D" id="3.40.640.10">
    <property type="entry name" value="Type I PLP-dependent aspartate aminotransferase-like (Major domain)"/>
    <property type="match status" value="1"/>
</dbReference>
<dbReference type="InterPro" id="IPR010977">
    <property type="entry name" value="Aromatic_deC"/>
</dbReference>
<dbReference type="InterPro" id="IPR002129">
    <property type="entry name" value="PyrdxlP-dep_de-COase"/>
</dbReference>
<dbReference type="InterPro" id="IPR015424">
    <property type="entry name" value="PyrdxlP-dep_Trfase"/>
</dbReference>
<dbReference type="InterPro" id="IPR015421">
    <property type="entry name" value="PyrdxlP-dep_Trfase_major"/>
</dbReference>
<dbReference type="InterPro" id="IPR015422">
    <property type="entry name" value="PyrdxlP-dep_Trfase_small"/>
</dbReference>
<dbReference type="InterPro" id="IPR021115">
    <property type="entry name" value="Pyridoxal-P_BS"/>
</dbReference>
<dbReference type="PANTHER" id="PTHR11999:SF60">
    <property type="entry name" value="3,4-DIHYDROXYPHENYLACETALDEHYDE SYNTHASE"/>
    <property type="match status" value="1"/>
</dbReference>
<dbReference type="PANTHER" id="PTHR11999">
    <property type="entry name" value="GROUP II PYRIDOXAL-5-PHOSPHATE DECARBOXYLASE"/>
    <property type="match status" value="1"/>
</dbReference>
<dbReference type="Pfam" id="PF00282">
    <property type="entry name" value="Pyridoxal_deC"/>
    <property type="match status" value="1"/>
</dbReference>
<dbReference type="PRINTS" id="PR00800">
    <property type="entry name" value="YHDCRBOXLASE"/>
</dbReference>
<dbReference type="SUPFAM" id="SSF53383">
    <property type="entry name" value="PLP-dependent transferases"/>
    <property type="match status" value="1"/>
</dbReference>
<dbReference type="PROSITE" id="PS00392">
    <property type="entry name" value="DDC_GAD_HDC_YDC"/>
    <property type="match status" value="1"/>
</dbReference>
<protein>
    <recommendedName>
        <fullName>3,4-dihydroxyphenylacetaldehyde synthase 2</fullName>
        <shortName>DHPAA synthase</shortName>
        <shortName evidence="2">DOPAL synthase</shortName>
        <ecNumber evidence="1">4.1.1.107</ecNumber>
    </recommendedName>
    <alternativeName>
        <fullName evidence="1">Alpha-methyldopa resistant protein</fullName>
        <shortName evidence="1">AMD-r protein</shortName>
    </alternativeName>
</protein>
<accession>P81893</accession>
<feature type="chain" id="PRO_0000147011" description="3,4-dihydroxyphenylacetaldehyde synthase 2">
    <location>
        <begin position="1" status="less than"/>
        <end position="328" status="greater than"/>
    </location>
</feature>
<feature type="active site" evidence="1">
    <location>
        <position position="111"/>
    </location>
</feature>
<feature type="modified residue" description="N6-(pyridoxal phosphate)lysine" evidence="3">
    <location>
        <position position="222"/>
    </location>
</feature>
<feature type="non-terminal residue">
    <location>
        <position position="1"/>
    </location>
</feature>
<feature type="non-terminal residue">
    <location>
        <position position="328"/>
    </location>
</feature>
<comment type="function">
    <text evidence="1">Catalyzes the decarboxylation-oxidative deamination of L-3,4-dihydroxyphenylalanine (L-DOPA) to 3,4-dihydroxylphenylacetaldehyde (DHPAA) (By similarity). Involved in cuticle development (By similarity). Probably responsible for the protein cross-linking during the development of flexible cuticles (By similarity).</text>
</comment>
<comment type="catalytic activity">
    <reaction evidence="1">
        <text>L-dopa + O2 + H2O + H(+) = 3,4-dihydroxyphenylacetaldehyde + H2O2 + NH4(+) + CO2</text>
        <dbReference type="Rhea" id="RHEA:55524"/>
        <dbReference type="ChEBI" id="CHEBI:15377"/>
        <dbReference type="ChEBI" id="CHEBI:15378"/>
        <dbReference type="ChEBI" id="CHEBI:15379"/>
        <dbReference type="ChEBI" id="CHEBI:16240"/>
        <dbReference type="ChEBI" id="CHEBI:16526"/>
        <dbReference type="ChEBI" id="CHEBI:27978"/>
        <dbReference type="ChEBI" id="CHEBI:28938"/>
        <dbReference type="ChEBI" id="CHEBI:57504"/>
        <dbReference type="EC" id="4.1.1.107"/>
    </reaction>
    <physiologicalReaction direction="left-to-right" evidence="1">
        <dbReference type="Rhea" id="RHEA:55525"/>
    </physiologicalReaction>
</comment>
<comment type="cofactor">
    <cofactor evidence="1">
        <name>pyridoxal 5'-phosphate</name>
        <dbReference type="ChEBI" id="CHEBI:597326"/>
    </cofactor>
</comment>
<comment type="similarity">
    <text evidence="3">Belongs to the group II decarboxylase family.</text>
</comment>
<keyword id="KW-0128">Catecholamine metabolism</keyword>
<keyword id="KW-0193">Cuticle</keyword>
<keyword id="KW-0456">Lyase</keyword>
<keyword id="KW-0663">Pyridoxal phosphate</keyword>
<gene>
    <name type="primary">amd</name>
    <name type="synonym">l(2)amd</name>
</gene>
<organism>
    <name type="scientific">Drosophila simulans</name>
    <name type="common">Fruit fly</name>
    <dbReference type="NCBI Taxonomy" id="7240"/>
    <lineage>
        <taxon>Eukaryota</taxon>
        <taxon>Metazoa</taxon>
        <taxon>Ecdysozoa</taxon>
        <taxon>Arthropoda</taxon>
        <taxon>Hexapoda</taxon>
        <taxon>Insecta</taxon>
        <taxon>Pterygota</taxon>
        <taxon>Neoptera</taxon>
        <taxon>Endopterygota</taxon>
        <taxon>Diptera</taxon>
        <taxon>Brachycera</taxon>
        <taxon>Muscomorpha</taxon>
        <taxon>Ephydroidea</taxon>
        <taxon>Drosophilidae</taxon>
        <taxon>Drosophila</taxon>
        <taxon>Sophophora</taxon>
    </lineage>
</organism>
<name>DHAPP_DROSI</name>
<reference key="1">
    <citation type="journal article" date="1999" name="Gene">
        <title>A compact gene cluster in Drosophila: the unrelated Cs gene is compressed between duplicated amd and Ddc.</title>
        <authorList>
            <person name="Tatarenkov A."/>
            <person name="Saez A.G."/>
            <person name="Ayala F.J."/>
        </authorList>
    </citation>
    <scope>NUCLEOTIDE SEQUENCE [MRNA]</scope>
    <source>
        <strain>St. Lucia</strain>
    </source>
</reference>
<reference key="2">
    <citation type="journal article" date="2018" name="Dev. Comp. Immunol.">
        <title>3,4-Dihydroxyphenylacetaldehyde synthase and cuticle formation in insects.</title>
        <authorList>
            <person name="Liao C."/>
            <person name="Upadhyay A."/>
            <person name="Liang J."/>
            <person name="Han Q."/>
            <person name="Li J."/>
        </authorList>
    </citation>
    <scope>REVIEW</scope>
</reference>